<gene>
    <name evidence="1" type="primary">rpsM</name>
    <name type="ordered locus">YPO0231</name>
    <name type="ordered locus">y4012</name>
    <name type="ordered locus">YP_0229</name>
</gene>
<keyword id="KW-1185">Reference proteome</keyword>
<keyword id="KW-0687">Ribonucleoprotein</keyword>
<keyword id="KW-0689">Ribosomal protein</keyword>
<keyword id="KW-0694">RNA-binding</keyword>
<keyword id="KW-0699">rRNA-binding</keyword>
<keyword id="KW-0820">tRNA-binding</keyword>
<evidence type="ECO:0000255" key="1">
    <source>
        <dbReference type="HAMAP-Rule" id="MF_01315"/>
    </source>
</evidence>
<evidence type="ECO:0000256" key="2">
    <source>
        <dbReference type="SAM" id="MobiDB-lite"/>
    </source>
</evidence>
<evidence type="ECO:0000305" key="3"/>
<dbReference type="EMBL" id="AL590842">
    <property type="protein sequence ID" value="CAL18914.1"/>
    <property type="molecule type" value="Genomic_DNA"/>
</dbReference>
<dbReference type="EMBL" id="AE009952">
    <property type="protein sequence ID" value="AAM87556.1"/>
    <property type="molecule type" value="Genomic_DNA"/>
</dbReference>
<dbReference type="EMBL" id="AE017042">
    <property type="protein sequence ID" value="AAS60505.1"/>
    <property type="molecule type" value="Genomic_DNA"/>
</dbReference>
<dbReference type="PIR" id="AH0028">
    <property type="entry name" value="AH0028"/>
</dbReference>
<dbReference type="RefSeq" id="WP_002213346.1">
    <property type="nucleotide sequence ID" value="NZ_WUCM01000078.1"/>
</dbReference>
<dbReference type="RefSeq" id="YP_002345312.1">
    <property type="nucleotide sequence ID" value="NC_003143.1"/>
</dbReference>
<dbReference type="SMR" id="Q8ZJ90"/>
<dbReference type="STRING" id="214092.YPO0231"/>
<dbReference type="PaxDb" id="214092-YPO0231"/>
<dbReference type="DNASU" id="1148959"/>
<dbReference type="EnsemblBacteria" id="AAS60505">
    <property type="protein sequence ID" value="AAS60505"/>
    <property type="gene ID" value="YP_0229"/>
</dbReference>
<dbReference type="GeneID" id="96663174"/>
<dbReference type="KEGG" id="ype:YPO0231"/>
<dbReference type="KEGG" id="ypj:CH55_2970"/>
<dbReference type="KEGG" id="ypk:y4012"/>
<dbReference type="KEGG" id="ypl:CH46_686"/>
<dbReference type="KEGG" id="ypm:YP_0229"/>
<dbReference type="KEGG" id="ypv:BZ15_3341"/>
<dbReference type="KEGG" id="ypw:CH59_2322"/>
<dbReference type="PATRIC" id="fig|214092.21.peg.459"/>
<dbReference type="eggNOG" id="COG0099">
    <property type="taxonomic scope" value="Bacteria"/>
</dbReference>
<dbReference type="HOGENOM" id="CLU_103849_1_2_6"/>
<dbReference type="OMA" id="MNVKRLM"/>
<dbReference type="OrthoDB" id="9803610at2"/>
<dbReference type="Proteomes" id="UP000000815">
    <property type="component" value="Chromosome"/>
</dbReference>
<dbReference type="Proteomes" id="UP000001019">
    <property type="component" value="Chromosome"/>
</dbReference>
<dbReference type="Proteomes" id="UP000002490">
    <property type="component" value="Chromosome"/>
</dbReference>
<dbReference type="GO" id="GO:0005829">
    <property type="term" value="C:cytosol"/>
    <property type="evidence" value="ECO:0000318"/>
    <property type="project" value="GO_Central"/>
</dbReference>
<dbReference type="GO" id="GO:0015935">
    <property type="term" value="C:small ribosomal subunit"/>
    <property type="evidence" value="ECO:0000318"/>
    <property type="project" value="GO_Central"/>
</dbReference>
<dbReference type="GO" id="GO:0019843">
    <property type="term" value="F:rRNA binding"/>
    <property type="evidence" value="ECO:0007669"/>
    <property type="project" value="UniProtKB-UniRule"/>
</dbReference>
<dbReference type="GO" id="GO:0003735">
    <property type="term" value="F:structural constituent of ribosome"/>
    <property type="evidence" value="ECO:0007669"/>
    <property type="project" value="InterPro"/>
</dbReference>
<dbReference type="GO" id="GO:0000049">
    <property type="term" value="F:tRNA binding"/>
    <property type="evidence" value="ECO:0007669"/>
    <property type="project" value="UniProtKB-UniRule"/>
</dbReference>
<dbReference type="GO" id="GO:0006412">
    <property type="term" value="P:translation"/>
    <property type="evidence" value="ECO:0007669"/>
    <property type="project" value="UniProtKB-UniRule"/>
</dbReference>
<dbReference type="FunFam" id="1.10.8.50:FF:000001">
    <property type="entry name" value="30S ribosomal protein S13"/>
    <property type="match status" value="1"/>
</dbReference>
<dbReference type="FunFam" id="4.10.910.10:FF:000001">
    <property type="entry name" value="30S ribosomal protein S13"/>
    <property type="match status" value="1"/>
</dbReference>
<dbReference type="Gene3D" id="1.10.8.50">
    <property type="match status" value="1"/>
</dbReference>
<dbReference type="Gene3D" id="4.10.910.10">
    <property type="entry name" value="30s ribosomal protein s13, domain 2"/>
    <property type="match status" value="1"/>
</dbReference>
<dbReference type="HAMAP" id="MF_01315">
    <property type="entry name" value="Ribosomal_uS13"/>
    <property type="match status" value="1"/>
</dbReference>
<dbReference type="InterPro" id="IPR027437">
    <property type="entry name" value="Rbsml_uS13_C"/>
</dbReference>
<dbReference type="InterPro" id="IPR001892">
    <property type="entry name" value="Ribosomal_uS13"/>
</dbReference>
<dbReference type="InterPro" id="IPR010979">
    <property type="entry name" value="Ribosomal_uS13-like_H2TH"/>
</dbReference>
<dbReference type="InterPro" id="IPR019980">
    <property type="entry name" value="Ribosomal_uS13_bac-type"/>
</dbReference>
<dbReference type="InterPro" id="IPR018269">
    <property type="entry name" value="Ribosomal_uS13_CS"/>
</dbReference>
<dbReference type="NCBIfam" id="TIGR03631">
    <property type="entry name" value="uS13_bact"/>
    <property type="match status" value="1"/>
</dbReference>
<dbReference type="PANTHER" id="PTHR10871">
    <property type="entry name" value="30S RIBOSOMAL PROTEIN S13/40S RIBOSOMAL PROTEIN S18"/>
    <property type="match status" value="1"/>
</dbReference>
<dbReference type="PANTHER" id="PTHR10871:SF1">
    <property type="entry name" value="SMALL RIBOSOMAL SUBUNIT PROTEIN US13M"/>
    <property type="match status" value="1"/>
</dbReference>
<dbReference type="Pfam" id="PF00416">
    <property type="entry name" value="Ribosomal_S13"/>
    <property type="match status" value="1"/>
</dbReference>
<dbReference type="PIRSF" id="PIRSF002134">
    <property type="entry name" value="Ribosomal_S13"/>
    <property type="match status" value="1"/>
</dbReference>
<dbReference type="SUPFAM" id="SSF46946">
    <property type="entry name" value="S13-like H2TH domain"/>
    <property type="match status" value="1"/>
</dbReference>
<dbReference type="PROSITE" id="PS00646">
    <property type="entry name" value="RIBOSOMAL_S13_1"/>
    <property type="match status" value="1"/>
</dbReference>
<dbReference type="PROSITE" id="PS50159">
    <property type="entry name" value="RIBOSOMAL_S13_2"/>
    <property type="match status" value="1"/>
</dbReference>
<sequence>MARIAGINIPDQKHTVIALTAIFGIGKTRSQAICVAAGIAEHVKISELSEEQIEKLRDEVAKYVVEGDLRREVTLSIKRLMDLGTYRGLRHRRGLPVRGQRTKTNARTRKGPRKPIKK</sequence>
<comment type="function">
    <text evidence="1">Located at the top of the head of the 30S subunit, it contacts several helices of the 16S rRNA. In the 70S ribosome it contacts the 23S rRNA (bridge B1a) and protein L5 of the 50S subunit (bridge B1b), connecting the 2 subunits; these bridges are implicated in subunit movement. Contacts the tRNAs in the A and P-sites.</text>
</comment>
<comment type="subunit">
    <text evidence="1">Part of the 30S ribosomal subunit. Forms a loose heterodimer with protein S19. Forms two bridges to the 50S subunit in the 70S ribosome.</text>
</comment>
<comment type="similarity">
    <text evidence="1">Belongs to the universal ribosomal protein uS13 family.</text>
</comment>
<protein>
    <recommendedName>
        <fullName evidence="1">Small ribosomal subunit protein uS13</fullName>
    </recommendedName>
    <alternativeName>
        <fullName evidence="3">30S ribosomal protein S13</fullName>
    </alternativeName>
</protein>
<accession>Q8ZJ90</accession>
<accession>Q0WK76</accession>
<name>RS13_YERPE</name>
<reference key="1">
    <citation type="journal article" date="2001" name="Nature">
        <title>Genome sequence of Yersinia pestis, the causative agent of plague.</title>
        <authorList>
            <person name="Parkhill J."/>
            <person name="Wren B.W."/>
            <person name="Thomson N.R."/>
            <person name="Titball R.W."/>
            <person name="Holden M.T.G."/>
            <person name="Prentice M.B."/>
            <person name="Sebaihia M."/>
            <person name="James K.D."/>
            <person name="Churcher C.M."/>
            <person name="Mungall K.L."/>
            <person name="Baker S."/>
            <person name="Basham D."/>
            <person name="Bentley S.D."/>
            <person name="Brooks K."/>
            <person name="Cerdeno-Tarraga A.-M."/>
            <person name="Chillingworth T."/>
            <person name="Cronin A."/>
            <person name="Davies R.M."/>
            <person name="Davis P."/>
            <person name="Dougan G."/>
            <person name="Feltwell T."/>
            <person name="Hamlin N."/>
            <person name="Holroyd S."/>
            <person name="Jagels K."/>
            <person name="Karlyshev A.V."/>
            <person name="Leather S."/>
            <person name="Moule S."/>
            <person name="Oyston P.C.F."/>
            <person name="Quail M.A."/>
            <person name="Rutherford K.M."/>
            <person name="Simmonds M."/>
            <person name="Skelton J."/>
            <person name="Stevens K."/>
            <person name="Whitehead S."/>
            <person name="Barrell B.G."/>
        </authorList>
    </citation>
    <scope>NUCLEOTIDE SEQUENCE [LARGE SCALE GENOMIC DNA]</scope>
    <source>
        <strain>CO-92 / Biovar Orientalis</strain>
    </source>
</reference>
<reference key="2">
    <citation type="journal article" date="2002" name="J. Bacteriol.">
        <title>Genome sequence of Yersinia pestis KIM.</title>
        <authorList>
            <person name="Deng W."/>
            <person name="Burland V."/>
            <person name="Plunkett G. III"/>
            <person name="Boutin A."/>
            <person name="Mayhew G.F."/>
            <person name="Liss P."/>
            <person name="Perna N.T."/>
            <person name="Rose D.J."/>
            <person name="Mau B."/>
            <person name="Zhou S."/>
            <person name="Schwartz D.C."/>
            <person name="Fetherston J.D."/>
            <person name="Lindler L.E."/>
            <person name="Brubaker R.R."/>
            <person name="Plano G.V."/>
            <person name="Straley S.C."/>
            <person name="McDonough K.A."/>
            <person name="Nilles M.L."/>
            <person name="Matson J.S."/>
            <person name="Blattner F.R."/>
            <person name="Perry R.D."/>
        </authorList>
    </citation>
    <scope>NUCLEOTIDE SEQUENCE [LARGE SCALE GENOMIC DNA]</scope>
    <source>
        <strain>KIM10+ / Biovar Mediaevalis</strain>
    </source>
</reference>
<reference key="3">
    <citation type="journal article" date="2004" name="DNA Res.">
        <title>Complete genome sequence of Yersinia pestis strain 91001, an isolate avirulent to humans.</title>
        <authorList>
            <person name="Song Y."/>
            <person name="Tong Z."/>
            <person name="Wang J."/>
            <person name="Wang L."/>
            <person name="Guo Z."/>
            <person name="Han Y."/>
            <person name="Zhang J."/>
            <person name="Pei D."/>
            <person name="Zhou D."/>
            <person name="Qin H."/>
            <person name="Pang X."/>
            <person name="Han Y."/>
            <person name="Zhai J."/>
            <person name="Li M."/>
            <person name="Cui B."/>
            <person name="Qi Z."/>
            <person name="Jin L."/>
            <person name="Dai R."/>
            <person name="Chen F."/>
            <person name="Li S."/>
            <person name="Ye C."/>
            <person name="Du Z."/>
            <person name="Lin W."/>
            <person name="Wang J."/>
            <person name="Yu J."/>
            <person name="Yang H."/>
            <person name="Wang J."/>
            <person name="Huang P."/>
            <person name="Yang R."/>
        </authorList>
    </citation>
    <scope>NUCLEOTIDE SEQUENCE [LARGE SCALE GENOMIC DNA]</scope>
    <source>
        <strain>91001 / Biovar Mediaevalis</strain>
    </source>
</reference>
<organism>
    <name type="scientific">Yersinia pestis</name>
    <dbReference type="NCBI Taxonomy" id="632"/>
    <lineage>
        <taxon>Bacteria</taxon>
        <taxon>Pseudomonadati</taxon>
        <taxon>Pseudomonadota</taxon>
        <taxon>Gammaproteobacteria</taxon>
        <taxon>Enterobacterales</taxon>
        <taxon>Yersiniaceae</taxon>
        <taxon>Yersinia</taxon>
    </lineage>
</organism>
<feature type="chain" id="PRO_0000132175" description="Small ribosomal subunit protein uS13">
    <location>
        <begin position="1"/>
        <end position="118"/>
    </location>
</feature>
<feature type="region of interest" description="Disordered" evidence="2">
    <location>
        <begin position="92"/>
        <end position="118"/>
    </location>
</feature>
<proteinExistence type="inferred from homology"/>